<reference key="1">
    <citation type="journal article" date="1999" name="Nature">
        <title>Sequence and analysis of chromosome 2 of the plant Arabidopsis thaliana.</title>
        <authorList>
            <person name="Lin X."/>
            <person name="Kaul S."/>
            <person name="Rounsley S.D."/>
            <person name="Shea T.P."/>
            <person name="Benito M.-I."/>
            <person name="Town C.D."/>
            <person name="Fujii C.Y."/>
            <person name="Mason T.M."/>
            <person name="Bowman C.L."/>
            <person name="Barnstead M.E."/>
            <person name="Feldblyum T.V."/>
            <person name="Buell C.R."/>
            <person name="Ketchum K.A."/>
            <person name="Lee J.J."/>
            <person name="Ronning C.M."/>
            <person name="Koo H.L."/>
            <person name="Moffat K.S."/>
            <person name="Cronin L.A."/>
            <person name="Shen M."/>
            <person name="Pai G."/>
            <person name="Van Aken S."/>
            <person name="Umayam L."/>
            <person name="Tallon L.J."/>
            <person name="Gill J.E."/>
            <person name="Adams M.D."/>
            <person name="Carrera A.J."/>
            <person name="Creasy T.H."/>
            <person name="Goodman H.M."/>
            <person name="Somerville C.R."/>
            <person name="Copenhaver G.P."/>
            <person name="Preuss D."/>
            <person name="Nierman W.C."/>
            <person name="White O."/>
            <person name="Eisen J.A."/>
            <person name="Salzberg S.L."/>
            <person name="Fraser C.M."/>
            <person name="Venter J.C."/>
        </authorList>
    </citation>
    <scope>NUCLEOTIDE SEQUENCE [LARGE SCALE GENOMIC DNA]</scope>
    <source>
        <strain>cv. Columbia</strain>
    </source>
</reference>
<reference key="2">
    <citation type="journal article" date="2017" name="Plant J.">
        <title>Araport11: a complete reannotation of the Arabidopsis thaliana reference genome.</title>
        <authorList>
            <person name="Cheng C.Y."/>
            <person name="Krishnakumar V."/>
            <person name="Chan A.P."/>
            <person name="Thibaud-Nissen F."/>
            <person name="Schobel S."/>
            <person name="Town C.D."/>
        </authorList>
    </citation>
    <scope>GENOME REANNOTATION</scope>
    <source>
        <strain>cv. Columbia</strain>
    </source>
</reference>
<reference key="3">
    <citation type="journal article" date="2003" name="J. Mol. Evol.">
        <title>The carboxylesterase gene family from Arabidopsis thaliana.</title>
        <authorList>
            <person name="Marshall S.D."/>
            <person name="Putterill J.J."/>
            <person name="Plummer K.M."/>
            <person name="Newcomb R.D."/>
        </authorList>
    </citation>
    <scope>TISSUE SPECIFICITY</scope>
    <scope>GENE FAMILY</scope>
    <scope>NOMENCLATURE</scope>
</reference>
<proteinExistence type="evidence at transcript level"/>
<feature type="chain" id="PRO_0000402555" description="Probable carboxylesterase 9">
    <location>
        <begin position="1"/>
        <end position="324"/>
    </location>
</feature>
<feature type="short sequence motif" description="Involved in the stabilization of the negatively charged intermediate by the formation of the oxyanion hole" evidence="3">
    <location>
        <begin position="86"/>
        <end position="88"/>
    </location>
</feature>
<feature type="active site" evidence="2">
    <location>
        <position position="171"/>
    </location>
</feature>
<feature type="active site" evidence="2">
    <location>
        <position position="272"/>
    </location>
</feature>
<feature type="active site" evidence="2">
    <location>
        <position position="302"/>
    </location>
</feature>
<accession>O64641</accession>
<keyword id="KW-0378">Hydrolase</keyword>
<keyword id="KW-1185">Reference proteome</keyword>
<keyword id="KW-0719">Serine esterase</keyword>
<evidence type="ECO:0000250" key="1"/>
<evidence type="ECO:0000250" key="2">
    <source>
        <dbReference type="UniProtKB" id="Q0ZPV7"/>
    </source>
</evidence>
<evidence type="ECO:0000250" key="3">
    <source>
        <dbReference type="UniProtKB" id="Q5NUF3"/>
    </source>
</evidence>
<evidence type="ECO:0000269" key="4">
    <source>
    </source>
</evidence>
<evidence type="ECO:0000305" key="5"/>
<gene>
    <name type="primary">CXE9</name>
    <name type="ordered locus">At2g45610</name>
    <name type="ORF">F17K2.14</name>
</gene>
<name>CXE9_ARATH</name>
<comment type="function">
    <text evidence="1">Carboxylesterase acting on esters with varying acyl chain length.</text>
</comment>
<comment type="catalytic activity">
    <reaction>
        <text>a carboxylic ester + H2O = an alcohol + a carboxylate + H(+)</text>
        <dbReference type="Rhea" id="RHEA:21164"/>
        <dbReference type="ChEBI" id="CHEBI:15377"/>
        <dbReference type="ChEBI" id="CHEBI:15378"/>
        <dbReference type="ChEBI" id="CHEBI:29067"/>
        <dbReference type="ChEBI" id="CHEBI:30879"/>
        <dbReference type="ChEBI" id="CHEBI:33308"/>
        <dbReference type="EC" id="3.1.1.1"/>
    </reaction>
</comment>
<comment type="tissue specificity">
    <text evidence="4">Expressed in flowers.</text>
</comment>
<comment type="similarity">
    <text evidence="5">Belongs to the 'GDXG' lipolytic enzyme family.</text>
</comment>
<sequence>MSRDSPPAFDPYKHLNITINPNGSCTRHFVWPRVEPDPDPCPGKLAASKDVTINHETGVSVRIFRPTNLPSNDNAVARLPIIIHLHGSGWILYPANSAANDRCCSQMASELTVIVVSVHYRLPPEHRLPAQYDDALDALLWVKQQVVDSTNGEPWLKDYADFSRCYICGSSNGANIAFQLALRSLDHDLTPLQIDGCVFYQPLFGGKTRTKSELKNFADPVMPVPAVDAMWELSLPVGVDRDHRYCNPLGYLPQKEKVGRLGRCLVIGYGGDTSLDRQQDFVNLLVAAGVRVEARFDDAGFHSIELVDPRRAVALLNMIRDFIS</sequence>
<dbReference type="EC" id="3.1.1.1"/>
<dbReference type="EMBL" id="AC003680">
    <property type="protein sequence ID" value="AAC06165.1"/>
    <property type="molecule type" value="Genomic_DNA"/>
</dbReference>
<dbReference type="EMBL" id="CP002685">
    <property type="protein sequence ID" value="AEC10576.1"/>
    <property type="molecule type" value="Genomic_DNA"/>
</dbReference>
<dbReference type="PIR" id="T00874">
    <property type="entry name" value="T00874"/>
</dbReference>
<dbReference type="RefSeq" id="NP_182085.1">
    <property type="nucleotide sequence ID" value="NM_130123.2"/>
</dbReference>
<dbReference type="SMR" id="O64641"/>
<dbReference type="FunCoup" id="O64641">
    <property type="interactions" value="98"/>
</dbReference>
<dbReference type="STRING" id="3702.O64641"/>
<dbReference type="ESTHER" id="arath-At2g45610">
    <property type="family name" value="Plant_carboxylesterase"/>
</dbReference>
<dbReference type="MEROPS" id="S09.A11"/>
<dbReference type="PaxDb" id="3702-AT2G45610.1"/>
<dbReference type="ProteomicsDB" id="220517"/>
<dbReference type="EnsemblPlants" id="AT2G45610.1">
    <property type="protein sequence ID" value="AT2G45610.1"/>
    <property type="gene ID" value="AT2G45610"/>
</dbReference>
<dbReference type="GeneID" id="819169"/>
<dbReference type="Gramene" id="AT2G45610.1">
    <property type="protein sequence ID" value="AT2G45610.1"/>
    <property type="gene ID" value="AT2G45610"/>
</dbReference>
<dbReference type="KEGG" id="ath:AT2G45610"/>
<dbReference type="Araport" id="AT2G45610"/>
<dbReference type="TAIR" id="AT2G45610"/>
<dbReference type="eggNOG" id="KOG1515">
    <property type="taxonomic scope" value="Eukaryota"/>
</dbReference>
<dbReference type="HOGENOM" id="CLU_012494_22_1_1"/>
<dbReference type="InParanoid" id="O64641"/>
<dbReference type="OMA" id="YFHHGGW"/>
<dbReference type="PhylomeDB" id="O64641"/>
<dbReference type="BioCyc" id="ARA:AT2G45610-MONOMER"/>
<dbReference type="PRO" id="PR:O64641"/>
<dbReference type="Proteomes" id="UP000006548">
    <property type="component" value="Chromosome 2"/>
</dbReference>
<dbReference type="ExpressionAtlas" id="O64641">
    <property type="expression patterns" value="baseline and differential"/>
</dbReference>
<dbReference type="GO" id="GO:0106435">
    <property type="term" value="F:carboxylesterase activity"/>
    <property type="evidence" value="ECO:0007669"/>
    <property type="project" value="UniProtKB-EC"/>
</dbReference>
<dbReference type="Gene3D" id="3.40.50.1820">
    <property type="entry name" value="alpha/beta hydrolase"/>
    <property type="match status" value="1"/>
</dbReference>
<dbReference type="InterPro" id="IPR013094">
    <property type="entry name" value="AB_hydrolase_3"/>
</dbReference>
<dbReference type="InterPro" id="IPR029058">
    <property type="entry name" value="AB_hydrolase_fold"/>
</dbReference>
<dbReference type="InterPro" id="IPR050466">
    <property type="entry name" value="Carboxylest/Gibb_receptor"/>
</dbReference>
<dbReference type="PANTHER" id="PTHR23024">
    <property type="entry name" value="ARYLACETAMIDE DEACETYLASE"/>
    <property type="match status" value="1"/>
</dbReference>
<dbReference type="PANTHER" id="PTHR23024:SF212">
    <property type="entry name" value="CARBOXYLESTERASE 9-RELATED"/>
    <property type="match status" value="1"/>
</dbReference>
<dbReference type="Pfam" id="PF07859">
    <property type="entry name" value="Abhydrolase_3"/>
    <property type="match status" value="1"/>
</dbReference>
<dbReference type="SUPFAM" id="SSF53474">
    <property type="entry name" value="alpha/beta-Hydrolases"/>
    <property type="match status" value="1"/>
</dbReference>
<protein>
    <recommendedName>
        <fullName>Probable carboxylesterase 9</fullName>
    </recommendedName>
    <alternativeName>
        <fullName>AtCXE9</fullName>
        <ecNumber>3.1.1.1</ecNumber>
    </alternativeName>
</protein>
<organism>
    <name type="scientific">Arabidopsis thaliana</name>
    <name type="common">Mouse-ear cress</name>
    <dbReference type="NCBI Taxonomy" id="3702"/>
    <lineage>
        <taxon>Eukaryota</taxon>
        <taxon>Viridiplantae</taxon>
        <taxon>Streptophyta</taxon>
        <taxon>Embryophyta</taxon>
        <taxon>Tracheophyta</taxon>
        <taxon>Spermatophyta</taxon>
        <taxon>Magnoliopsida</taxon>
        <taxon>eudicotyledons</taxon>
        <taxon>Gunneridae</taxon>
        <taxon>Pentapetalae</taxon>
        <taxon>rosids</taxon>
        <taxon>malvids</taxon>
        <taxon>Brassicales</taxon>
        <taxon>Brassicaceae</taxon>
        <taxon>Camelineae</taxon>
        <taxon>Arabidopsis</taxon>
    </lineage>
</organism>